<comment type="function">
    <text evidence="1">One of the primary rRNA binding proteins, it binds directly to 16S rRNA where it nucleates assembly of the head domain of the 30S subunit. Is located at the subunit interface close to the decoding center, probably blocks exit of the E-site tRNA.</text>
</comment>
<comment type="subunit">
    <text evidence="1">Part of the 30S ribosomal subunit. Contacts proteins S9 and S11.</text>
</comment>
<comment type="similarity">
    <text evidence="1">Belongs to the universal ribosomal protein uS7 family.</text>
</comment>
<protein>
    <recommendedName>
        <fullName evidence="1">Small ribosomal subunit protein uS7</fullName>
    </recommendedName>
    <alternativeName>
        <fullName evidence="2">30S ribosomal protein S7</fullName>
    </alternativeName>
</protein>
<organism>
    <name type="scientific">Geobacter sulfurreducens (strain ATCC 51573 / DSM 12127 / PCA)</name>
    <dbReference type="NCBI Taxonomy" id="243231"/>
    <lineage>
        <taxon>Bacteria</taxon>
        <taxon>Pseudomonadati</taxon>
        <taxon>Thermodesulfobacteriota</taxon>
        <taxon>Desulfuromonadia</taxon>
        <taxon>Geobacterales</taxon>
        <taxon>Geobacteraceae</taxon>
        <taxon>Geobacter</taxon>
    </lineage>
</organism>
<sequence length="156" mass="17777">MPRRREVAKRVILPDPKFNDRVVAKLVSVIMLDGKKSTAERALYGALDIVSQKAGEEPVKVLKKCLDNIKPMLGVKSRRVGGSTYQVPVEVRADRRVSLAMRWLVRYANERSEKTITDKLAGEILDAYNNRGAAVKKREDTHRMAEANRAFAHYRW</sequence>
<evidence type="ECO:0000255" key="1">
    <source>
        <dbReference type="HAMAP-Rule" id="MF_00480"/>
    </source>
</evidence>
<evidence type="ECO:0000305" key="2"/>
<dbReference type="EMBL" id="AE017180">
    <property type="protein sequence ID" value="AAR36254.1"/>
    <property type="molecule type" value="Genomic_DNA"/>
</dbReference>
<dbReference type="RefSeq" id="NP_953904.1">
    <property type="nucleotide sequence ID" value="NC_002939.5"/>
</dbReference>
<dbReference type="RefSeq" id="WP_010943490.1">
    <property type="nucleotide sequence ID" value="NC_002939.5"/>
</dbReference>
<dbReference type="SMR" id="Q748Y7"/>
<dbReference type="FunCoup" id="Q748Y7">
    <property type="interactions" value="703"/>
</dbReference>
<dbReference type="STRING" id="243231.GSU2861"/>
<dbReference type="EnsemblBacteria" id="AAR36254">
    <property type="protein sequence ID" value="AAR36254"/>
    <property type="gene ID" value="GSU2861"/>
</dbReference>
<dbReference type="KEGG" id="gsu:GSU2861"/>
<dbReference type="PATRIC" id="fig|243231.5.peg.2887"/>
<dbReference type="eggNOG" id="COG0049">
    <property type="taxonomic scope" value="Bacteria"/>
</dbReference>
<dbReference type="HOGENOM" id="CLU_072226_1_1_7"/>
<dbReference type="InParanoid" id="Q748Y7"/>
<dbReference type="OrthoDB" id="9807653at2"/>
<dbReference type="Proteomes" id="UP000000577">
    <property type="component" value="Chromosome"/>
</dbReference>
<dbReference type="GO" id="GO:0022627">
    <property type="term" value="C:cytosolic small ribosomal subunit"/>
    <property type="evidence" value="ECO:0000318"/>
    <property type="project" value="GO_Central"/>
</dbReference>
<dbReference type="GO" id="GO:0005840">
    <property type="term" value="C:ribosome"/>
    <property type="evidence" value="ECO:0000318"/>
    <property type="project" value="GO_Central"/>
</dbReference>
<dbReference type="GO" id="GO:0003729">
    <property type="term" value="F:mRNA binding"/>
    <property type="evidence" value="ECO:0000318"/>
    <property type="project" value="GO_Central"/>
</dbReference>
<dbReference type="GO" id="GO:0019843">
    <property type="term" value="F:rRNA binding"/>
    <property type="evidence" value="ECO:0000318"/>
    <property type="project" value="GO_Central"/>
</dbReference>
<dbReference type="GO" id="GO:0003735">
    <property type="term" value="F:structural constituent of ribosome"/>
    <property type="evidence" value="ECO:0000318"/>
    <property type="project" value="GO_Central"/>
</dbReference>
<dbReference type="GO" id="GO:0000049">
    <property type="term" value="F:tRNA binding"/>
    <property type="evidence" value="ECO:0007669"/>
    <property type="project" value="UniProtKB-UniRule"/>
</dbReference>
<dbReference type="GO" id="GO:0000028">
    <property type="term" value="P:ribosomal small subunit assembly"/>
    <property type="evidence" value="ECO:0000318"/>
    <property type="project" value="GO_Central"/>
</dbReference>
<dbReference type="GO" id="GO:0006412">
    <property type="term" value="P:translation"/>
    <property type="evidence" value="ECO:0000318"/>
    <property type="project" value="GO_Central"/>
</dbReference>
<dbReference type="CDD" id="cd14869">
    <property type="entry name" value="uS7_Bacteria"/>
    <property type="match status" value="1"/>
</dbReference>
<dbReference type="FunFam" id="1.10.455.10:FF:000001">
    <property type="entry name" value="30S ribosomal protein S7"/>
    <property type="match status" value="1"/>
</dbReference>
<dbReference type="Gene3D" id="1.10.455.10">
    <property type="entry name" value="Ribosomal protein S7 domain"/>
    <property type="match status" value="1"/>
</dbReference>
<dbReference type="HAMAP" id="MF_00480_B">
    <property type="entry name" value="Ribosomal_uS7_B"/>
    <property type="match status" value="1"/>
</dbReference>
<dbReference type="InterPro" id="IPR000235">
    <property type="entry name" value="Ribosomal_uS7"/>
</dbReference>
<dbReference type="InterPro" id="IPR005717">
    <property type="entry name" value="Ribosomal_uS7_bac/org-type"/>
</dbReference>
<dbReference type="InterPro" id="IPR023798">
    <property type="entry name" value="Ribosomal_uS7_dom"/>
</dbReference>
<dbReference type="InterPro" id="IPR036823">
    <property type="entry name" value="Ribosomal_uS7_dom_sf"/>
</dbReference>
<dbReference type="NCBIfam" id="TIGR01029">
    <property type="entry name" value="rpsG_bact"/>
    <property type="match status" value="1"/>
</dbReference>
<dbReference type="PANTHER" id="PTHR11205">
    <property type="entry name" value="RIBOSOMAL PROTEIN S7"/>
    <property type="match status" value="1"/>
</dbReference>
<dbReference type="Pfam" id="PF00177">
    <property type="entry name" value="Ribosomal_S7"/>
    <property type="match status" value="1"/>
</dbReference>
<dbReference type="PIRSF" id="PIRSF002122">
    <property type="entry name" value="RPS7p_RPS7a_RPS5e_RPS7o"/>
    <property type="match status" value="1"/>
</dbReference>
<dbReference type="SUPFAM" id="SSF47973">
    <property type="entry name" value="Ribosomal protein S7"/>
    <property type="match status" value="1"/>
</dbReference>
<reference key="1">
    <citation type="journal article" date="2003" name="Science">
        <title>Genome of Geobacter sulfurreducens: metal reduction in subsurface environments.</title>
        <authorList>
            <person name="Methe B.A."/>
            <person name="Nelson K.E."/>
            <person name="Eisen J.A."/>
            <person name="Paulsen I.T."/>
            <person name="Nelson W.C."/>
            <person name="Heidelberg J.F."/>
            <person name="Wu D."/>
            <person name="Wu M."/>
            <person name="Ward N.L."/>
            <person name="Beanan M.J."/>
            <person name="Dodson R.J."/>
            <person name="Madupu R."/>
            <person name="Brinkac L.M."/>
            <person name="Daugherty S.C."/>
            <person name="DeBoy R.T."/>
            <person name="Durkin A.S."/>
            <person name="Gwinn M.L."/>
            <person name="Kolonay J.F."/>
            <person name="Sullivan S.A."/>
            <person name="Haft D.H."/>
            <person name="Selengut J."/>
            <person name="Davidsen T.M."/>
            <person name="Zafar N."/>
            <person name="White O."/>
            <person name="Tran B."/>
            <person name="Romero C."/>
            <person name="Forberger H.A."/>
            <person name="Weidman J.F."/>
            <person name="Khouri H.M."/>
            <person name="Feldblyum T.V."/>
            <person name="Utterback T.R."/>
            <person name="Van Aken S.E."/>
            <person name="Lovley D.R."/>
            <person name="Fraser C.M."/>
        </authorList>
    </citation>
    <scope>NUCLEOTIDE SEQUENCE [LARGE SCALE GENOMIC DNA]</scope>
    <source>
        <strain>ATCC 51573 / DSM 12127 / PCA</strain>
    </source>
</reference>
<gene>
    <name evidence="1" type="primary">rpsG</name>
    <name type="ordered locus">GSU2861</name>
</gene>
<proteinExistence type="inferred from homology"/>
<name>RS7_GEOSL</name>
<feature type="chain" id="PRO_0000124268" description="Small ribosomal subunit protein uS7">
    <location>
        <begin position="1"/>
        <end position="156"/>
    </location>
</feature>
<accession>Q748Y7</accession>
<keyword id="KW-1185">Reference proteome</keyword>
<keyword id="KW-0687">Ribonucleoprotein</keyword>
<keyword id="KW-0689">Ribosomal protein</keyword>
<keyword id="KW-0694">RNA-binding</keyword>
<keyword id="KW-0699">rRNA-binding</keyword>
<keyword id="KW-0820">tRNA-binding</keyword>